<evidence type="ECO:0000255" key="1">
    <source>
        <dbReference type="HAMAP-Rule" id="MF_00418"/>
    </source>
</evidence>
<evidence type="ECO:0000305" key="2"/>
<feature type="chain" id="PRO_1000050204" description="4-hydroxy-tetrahydrodipicolinate synthase">
    <location>
        <begin position="1"/>
        <end position="290"/>
    </location>
</feature>
<feature type="active site" description="Proton donor/acceptor" evidence="1">
    <location>
        <position position="132"/>
    </location>
</feature>
<feature type="active site" description="Schiff-base intermediate with substrate" evidence="1">
    <location>
        <position position="160"/>
    </location>
</feature>
<feature type="binding site" evidence="1">
    <location>
        <position position="44"/>
    </location>
    <ligand>
        <name>pyruvate</name>
        <dbReference type="ChEBI" id="CHEBI:15361"/>
    </ligand>
</feature>
<feature type="binding site" evidence="1">
    <location>
        <position position="202"/>
    </location>
    <ligand>
        <name>pyruvate</name>
        <dbReference type="ChEBI" id="CHEBI:15361"/>
    </ligand>
</feature>
<feature type="site" description="Part of a proton relay during catalysis" evidence="1">
    <location>
        <position position="43"/>
    </location>
</feature>
<feature type="site" description="Part of a proton relay during catalysis" evidence="1">
    <location>
        <position position="106"/>
    </location>
</feature>
<name>DAPA_LEGPC</name>
<keyword id="KW-0028">Amino-acid biosynthesis</keyword>
<keyword id="KW-0963">Cytoplasm</keyword>
<keyword id="KW-0220">Diaminopimelate biosynthesis</keyword>
<keyword id="KW-0456">Lyase</keyword>
<keyword id="KW-0457">Lysine biosynthesis</keyword>
<keyword id="KW-0704">Schiff base</keyword>
<gene>
    <name evidence="1" type="primary">dapA</name>
    <name type="ordered locus">LPC_1780</name>
</gene>
<organism>
    <name type="scientific">Legionella pneumophila (strain Corby)</name>
    <dbReference type="NCBI Taxonomy" id="400673"/>
    <lineage>
        <taxon>Bacteria</taxon>
        <taxon>Pseudomonadati</taxon>
        <taxon>Pseudomonadota</taxon>
        <taxon>Gammaproteobacteria</taxon>
        <taxon>Legionellales</taxon>
        <taxon>Legionellaceae</taxon>
        <taxon>Legionella</taxon>
    </lineage>
</organism>
<comment type="function">
    <text evidence="1">Catalyzes the condensation of (S)-aspartate-beta-semialdehyde [(S)-ASA] and pyruvate to 4-hydroxy-tetrahydrodipicolinate (HTPA).</text>
</comment>
<comment type="catalytic activity">
    <reaction evidence="1">
        <text>L-aspartate 4-semialdehyde + pyruvate = (2S,4S)-4-hydroxy-2,3,4,5-tetrahydrodipicolinate + H2O + H(+)</text>
        <dbReference type="Rhea" id="RHEA:34171"/>
        <dbReference type="ChEBI" id="CHEBI:15361"/>
        <dbReference type="ChEBI" id="CHEBI:15377"/>
        <dbReference type="ChEBI" id="CHEBI:15378"/>
        <dbReference type="ChEBI" id="CHEBI:67139"/>
        <dbReference type="ChEBI" id="CHEBI:537519"/>
        <dbReference type="EC" id="4.3.3.7"/>
    </reaction>
</comment>
<comment type="pathway">
    <text evidence="1">Amino-acid biosynthesis; L-lysine biosynthesis via DAP pathway; (S)-tetrahydrodipicolinate from L-aspartate: step 3/4.</text>
</comment>
<comment type="subunit">
    <text evidence="1">Homotetramer; dimer of dimers.</text>
</comment>
<comment type="subcellular location">
    <subcellularLocation>
        <location evidence="1">Cytoplasm</location>
    </subcellularLocation>
</comment>
<comment type="similarity">
    <text evidence="1">Belongs to the DapA family.</text>
</comment>
<comment type="caution">
    <text evidence="2">Was originally thought to be a dihydrodipicolinate synthase (DHDPS), catalyzing the condensation of (S)-aspartate-beta-semialdehyde [(S)-ASA] and pyruvate to dihydrodipicolinate (DHDP). However, it was shown in E.coli that the product of the enzymatic reaction is not dihydrodipicolinate but in fact (4S)-4-hydroxy-2,3,4,5-tetrahydro-(2S)-dipicolinic acid (HTPA), and that the consecutive dehydration reaction leading to DHDP is not spontaneous but catalyzed by DapB.</text>
</comment>
<sequence>MFSGSIVALVTPMRNDSVDVHHLRELVEFHIAKGTHALVAAGTTGEAGTLSHSEKLLVIKTVIEQAKERVPVIAGTAMNATKDCIELTQQAMEYGAHAAFIMTPAYIKPTQEGLYLHYSHIAQSVAIPIILYNVPGRTACDMLPETVARLAKISNIIGIKEATGQMTRLQQILRLCEGSIDVYSGDDLTAAQWLLSGAKGVISVTANVAAKLMAKMCDLAMDDDQAGCLRIQEQLMPLHELLFVESNPIPVKWAMKKMGLIGGELRLPMTELSEKHHQALEKVLKNLELI</sequence>
<protein>
    <recommendedName>
        <fullName evidence="1">4-hydroxy-tetrahydrodipicolinate synthase</fullName>
        <shortName evidence="1">HTPA synthase</shortName>
        <ecNumber evidence="1">4.3.3.7</ecNumber>
    </recommendedName>
</protein>
<proteinExistence type="inferred from homology"/>
<dbReference type="EC" id="4.3.3.7" evidence="1"/>
<dbReference type="EMBL" id="CP000675">
    <property type="protein sequence ID" value="ABQ55713.1"/>
    <property type="molecule type" value="Genomic_DNA"/>
</dbReference>
<dbReference type="RefSeq" id="WP_011947158.1">
    <property type="nucleotide sequence ID" value="NC_009494.2"/>
</dbReference>
<dbReference type="SMR" id="A5IEB3"/>
<dbReference type="KEGG" id="lpc:LPC_1780"/>
<dbReference type="HOGENOM" id="CLU_049343_7_1_6"/>
<dbReference type="UniPathway" id="UPA00034">
    <property type="reaction ID" value="UER00017"/>
</dbReference>
<dbReference type="GO" id="GO:0005829">
    <property type="term" value="C:cytosol"/>
    <property type="evidence" value="ECO:0007669"/>
    <property type="project" value="TreeGrafter"/>
</dbReference>
<dbReference type="GO" id="GO:0008840">
    <property type="term" value="F:4-hydroxy-tetrahydrodipicolinate synthase activity"/>
    <property type="evidence" value="ECO:0007669"/>
    <property type="project" value="UniProtKB-UniRule"/>
</dbReference>
<dbReference type="GO" id="GO:0019877">
    <property type="term" value="P:diaminopimelate biosynthetic process"/>
    <property type="evidence" value="ECO:0007669"/>
    <property type="project" value="UniProtKB-UniRule"/>
</dbReference>
<dbReference type="GO" id="GO:0009089">
    <property type="term" value="P:lysine biosynthetic process via diaminopimelate"/>
    <property type="evidence" value="ECO:0007669"/>
    <property type="project" value="UniProtKB-UniRule"/>
</dbReference>
<dbReference type="CDD" id="cd00950">
    <property type="entry name" value="DHDPS"/>
    <property type="match status" value="1"/>
</dbReference>
<dbReference type="Gene3D" id="3.20.20.70">
    <property type="entry name" value="Aldolase class I"/>
    <property type="match status" value="1"/>
</dbReference>
<dbReference type="HAMAP" id="MF_00418">
    <property type="entry name" value="DapA"/>
    <property type="match status" value="1"/>
</dbReference>
<dbReference type="InterPro" id="IPR013785">
    <property type="entry name" value="Aldolase_TIM"/>
</dbReference>
<dbReference type="InterPro" id="IPR005263">
    <property type="entry name" value="DapA"/>
</dbReference>
<dbReference type="InterPro" id="IPR002220">
    <property type="entry name" value="DapA-like"/>
</dbReference>
<dbReference type="InterPro" id="IPR020625">
    <property type="entry name" value="Schiff_base-form_aldolases_AS"/>
</dbReference>
<dbReference type="InterPro" id="IPR020624">
    <property type="entry name" value="Schiff_base-form_aldolases_CS"/>
</dbReference>
<dbReference type="NCBIfam" id="TIGR00674">
    <property type="entry name" value="dapA"/>
    <property type="match status" value="1"/>
</dbReference>
<dbReference type="PANTHER" id="PTHR12128:SF66">
    <property type="entry name" value="4-HYDROXY-2-OXOGLUTARATE ALDOLASE, MITOCHONDRIAL"/>
    <property type="match status" value="1"/>
</dbReference>
<dbReference type="PANTHER" id="PTHR12128">
    <property type="entry name" value="DIHYDRODIPICOLINATE SYNTHASE"/>
    <property type="match status" value="1"/>
</dbReference>
<dbReference type="Pfam" id="PF00701">
    <property type="entry name" value="DHDPS"/>
    <property type="match status" value="1"/>
</dbReference>
<dbReference type="PIRSF" id="PIRSF001365">
    <property type="entry name" value="DHDPS"/>
    <property type="match status" value="1"/>
</dbReference>
<dbReference type="PRINTS" id="PR00146">
    <property type="entry name" value="DHPICSNTHASE"/>
</dbReference>
<dbReference type="SMART" id="SM01130">
    <property type="entry name" value="DHDPS"/>
    <property type="match status" value="1"/>
</dbReference>
<dbReference type="SUPFAM" id="SSF51569">
    <property type="entry name" value="Aldolase"/>
    <property type="match status" value="1"/>
</dbReference>
<dbReference type="PROSITE" id="PS00665">
    <property type="entry name" value="DHDPS_1"/>
    <property type="match status" value="1"/>
</dbReference>
<dbReference type="PROSITE" id="PS00666">
    <property type="entry name" value="DHDPS_2"/>
    <property type="match status" value="1"/>
</dbReference>
<reference key="1">
    <citation type="submission" date="2006-11" db="EMBL/GenBank/DDBJ databases">
        <title>Identification and characterization of a new conjugation/ type IVA secretion system (trb/tra) of L. pneumophila Corby localized on a mobile genomic island.</title>
        <authorList>
            <person name="Gloeckner G."/>
            <person name="Albert-Weissenberger C."/>
            <person name="Weinmann E."/>
            <person name="Jacobi S."/>
            <person name="Schunder E."/>
            <person name="Steinert M."/>
            <person name="Buchrieser C."/>
            <person name="Hacker J."/>
            <person name="Heuner K."/>
        </authorList>
    </citation>
    <scope>NUCLEOTIDE SEQUENCE [LARGE SCALE GENOMIC DNA]</scope>
    <source>
        <strain>Corby</strain>
    </source>
</reference>
<accession>A5IEB3</accession>